<feature type="chain" id="PRO_1000090565" description="Crossover junction endodeoxyribonuclease RuvC">
    <location>
        <begin position="1"/>
        <end position="204"/>
    </location>
</feature>
<feature type="region of interest" description="Disordered" evidence="2">
    <location>
        <begin position="164"/>
        <end position="204"/>
    </location>
</feature>
<feature type="active site" evidence="1">
    <location>
        <position position="7"/>
    </location>
</feature>
<feature type="active site" evidence="1">
    <location>
        <position position="68"/>
    </location>
</feature>
<feature type="active site" evidence="1">
    <location>
        <position position="141"/>
    </location>
</feature>
<feature type="binding site" evidence="1">
    <location>
        <position position="7"/>
    </location>
    <ligand>
        <name>Mg(2+)</name>
        <dbReference type="ChEBI" id="CHEBI:18420"/>
        <label>1</label>
    </ligand>
</feature>
<feature type="binding site" evidence="1">
    <location>
        <position position="68"/>
    </location>
    <ligand>
        <name>Mg(2+)</name>
        <dbReference type="ChEBI" id="CHEBI:18420"/>
        <label>2</label>
    </ligand>
</feature>
<feature type="binding site" evidence="1">
    <location>
        <position position="141"/>
    </location>
    <ligand>
        <name>Mg(2+)</name>
        <dbReference type="ChEBI" id="CHEBI:18420"/>
        <label>1</label>
    </ligand>
</feature>
<sequence>MRVLGIDPGLTRCGVGVVEGVAGRPLTMIGVGVVRTSSDAELGDRLVAVERGIEQWLDEHSPGYVAVERVFAQHNVRTVMGTAQASAVAMLCAARRGIPVALHTPSEVKAAVTGSGRADKAQVGAMVTRLLRLDAPPKPADAADALALAICHIWRAPAQNRLQQAVAAHRTSGASRTPGAAGTPGPSRTPGAPGTSRTLKGRTA</sequence>
<gene>
    <name evidence="1" type="primary">ruvC</name>
    <name type="ordered locus">SGR_6015</name>
</gene>
<dbReference type="EC" id="3.1.21.10" evidence="1"/>
<dbReference type="EMBL" id="AP009493">
    <property type="protein sequence ID" value="BAG22844.1"/>
    <property type="molecule type" value="Genomic_DNA"/>
</dbReference>
<dbReference type="RefSeq" id="WP_012381671.1">
    <property type="nucleotide sequence ID" value="NC_010572.1"/>
</dbReference>
<dbReference type="SMR" id="B1W3G2"/>
<dbReference type="KEGG" id="sgr:SGR_6015"/>
<dbReference type="PATRIC" id="fig|455632.4.peg.6166"/>
<dbReference type="eggNOG" id="COG0817">
    <property type="taxonomic scope" value="Bacteria"/>
</dbReference>
<dbReference type="HOGENOM" id="CLU_091257_0_2_11"/>
<dbReference type="Proteomes" id="UP000001685">
    <property type="component" value="Chromosome"/>
</dbReference>
<dbReference type="GO" id="GO:0005737">
    <property type="term" value="C:cytoplasm"/>
    <property type="evidence" value="ECO:0007669"/>
    <property type="project" value="UniProtKB-SubCell"/>
</dbReference>
<dbReference type="GO" id="GO:0048476">
    <property type="term" value="C:Holliday junction resolvase complex"/>
    <property type="evidence" value="ECO:0007669"/>
    <property type="project" value="UniProtKB-UniRule"/>
</dbReference>
<dbReference type="GO" id="GO:0008821">
    <property type="term" value="F:crossover junction DNA endonuclease activity"/>
    <property type="evidence" value="ECO:0007669"/>
    <property type="project" value="UniProtKB-UniRule"/>
</dbReference>
<dbReference type="GO" id="GO:0003677">
    <property type="term" value="F:DNA binding"/>
    <property type="evidence" value="ECO:0007669"/>
    <property type="project" value="UniProtKB-KW"/>
</dbReference>
<dbReference type="GO" id="GO:0000287">
    <property type="term" value="F:magnesium ion binding"/>
    <property type="evidence" value="ECO:0007669"/>
    <property type="project" value="UniProtKB-UniRule"/>
</dbReference>
<dbReference type="GO" id="GO:0006310">
    <property type="term" value="P:DNA recombination"/>
    <property type="evidence" value="ECO:0007669"/>
    <property type="project" value="UniProtKB-UniRule"/>
</dbReference>
<dbReference type="GO" id="GO:0006281">
    <property type="term" value="P:DNA repair"/>
    <property type="evidence" value="ECO:0007669"/>
    <property type="project" value="UniProtKB-UniRule"/>
</dbReference>
<dbReference type="CDD" id="cd16962">
    <property type="entry name" value="RuvC"/>
    <property type="match status" value="1"/>
</dbReference>
<dbReference type="FunFam" id="3.30.420.10:FF:000002">
    <property type="entry name" value="Crossover junction endodeoxyribonuclease RuvC"/>
    <property type="match status" value="1"/>
</dbReference>
<dbReference type="Gene3D" id="3.30.420.10">
    <property type="entry name" value="Ribonuclease H-like superfamily/Ribonuclease H"/>
    <property type="match status" value="1"/>
</dbReference>
<dbReference type="HAMAP" id="MF_00034">
    <property type="entry name" value="RuvC"/>
    <property type="match status" value="1"/>
</dbReference>
<dbReference type="InterPro" id="IPR012337">
    <property type="entry name" value="RNaseH-like_sf"/>
</dbReference>
<dbReference type="InterPro" id="IPR036397">
    <property type="entry name" value="RNaseH_sf"/>
</dbReference>
<dbReference type="InterPro" id="IPR020563">
    <property type="entry name" value="X-over_junc_endoDNase_Mg_BS"/>
</dbReference>
<dbReference type="InterPro" id="IPR002176">
    <property type="entry name" value="X-over_junc_endoDNase_RuvC"/>
</dbReference>
<dbReference type="NCBIfam" id="TIGR00228">
    <property type="entry name" value="ruvC"/>
    <property type="match status" value="1"/>
</dbReference>
<dbReference type="PANTHER" id="PTHR30194">
    <property type="entry name" value="CROSSOVER JUNCTION ENDODEOXYRIBONUCLEASE RUVC"/>
    <property type="match status" value="1"/>
</dbReference>
<dbReference type="PANTHER" id="PTHR30194:SF3">
    <property type="entry name" value="CROSSOVER JUNCTION ENDODEOXYRIBONUCLEASE RUVC"/>
    <property type="match status" value="1"/>
</dbReference>
<dbReference type="Pfam" id="PF02075">
    <property type="entry name" value="RuvC"/>
    <property type="match status" value="1"/>
</dbReference>
<dbReference type="PRINTS" id="PR00696">
    <property type="entry name" value="RSOLVASERUVC"/>
</dbReference>
<dbReference type="SUPFAM" id="SSF53098">
    <property type="entry name" value="Ribonuclease H-like"/>
    <property type="match status" value="1"/>
</dbReference>
<dbReference type="PROSITE" id="PS01321">
    <property type="entry name" value="RUVC"/>
    <property type="match status" value="1"/>
</dbReference>
<name>RUVC_STRGG</name>
<accession>B1W3G2</accession>
<evidence type="ECO:0000255" key="1">
    <source>
        <dbReference type="HAMAP-Rule" id="MF_00034"/>
    </source>
</evidence>
<evidence type="ECO:0000256" key="2">
    <source>
        <dbReference type="SAM" id="MobiDB-lite"/>
    </source>
</evidence>
<keyword id="KW-0963">Cytoplasm</keyword>
<keyword id="KW-0227">DNA damage</keyword>
<keyword id="KW-0233">DNA recombination</keyword>
<keyword id="KW-0234">DNA repair</keyword>
<keyword id="KW-0238">DNA-binding</keyword>
<keyword id="KW-0255">Endonuclease</keyword>
<keyword id="KW-0378">Hydrolase</keyword>
<keyword id="KW-0460">Magnesium</keyword>
<keyword id="KW-0479">Metal-binding</keyword>
<keyword id="KW-0540">Nuclease</keyword>
<proteinExistence type="inferred from homology"/>
<comment type="function">
    <text evidence="1">The RuvA-RuvB-RuvC complex processes Holliday junction (HJ) DNA during genetic recombination and DNA repair. Endonuclease that resolves HJ intermediates. Cleaves cruciform DNA by making single-stranded nicks across the HJ at symmetrical positions within the homologous arms, yielding a 5'-phosphate and a 3'-hydroxyl group; requires a central core of homology in the junction. The consensus cleavage sequence is 5'-(A/T)TT(C/G)-3'. Cleavage occurs on the 3'-side of the TT dinucleotide at the point of strand exchange. HJ branch migration catalyzed by RuvA-RuvB allows RuvC to scan DNA until it finds its consensus sequence, where it cleaves and resolves the cruciform DNA.</text>
</comment>
<comment type="catalytic activity">
    <reaction evidence="1">
        <text>Endonucleolytic cleavage at a junction such as a reciprocal single-stranded crossover between two homologous DNA duplexes (Holliday junction).</text>
        <dbReference type="EC" id="3.1.21.10"/>
    </reaction>
</comment>
<comment type="cofactor">
    <cofactor evidence="1">
        <name>Mg(2+)</name>
        <dbReference type="ChEBI" id="CHEBI:18420"/>
    </cofactor>
    <text evidence="1">Binds 2 Mg(2+) ion per subunit.</text>
</comment>
<comment type="subunit">
    <text evidence="1">Homodimer which binds Holliday junction (HJ) DNA. The HJ becomes 2-fold symmetrical on binding to RuvC with unstacked arms; it has a different conformation from HJ DNA in complex with RuvA. In the full resolvosome a probable DNA-RuvA(4)-RuvB(12)-RuvC(2) complex forms which resolves the HJ.</text>
</comment>
<comment type="subcellular location">
    <subcellularLocation>
        <location evidence="1">Cytoplasm</location>
    </subcellularLocation>
</comment>
<comment type="similarity">
    <text evidence="1">Belongs to the RuvC family.</text>
</comment>
<reference key="1">
    <citation type="journal article" date="2008" name="J. Bacteriol.">
        <title>Genome sequence of the streptomycin-producing microorganism Streptomyces griseus IFO 13350.</title>
        <authorList>
            <person name="Ohnishi Y."/>
            <person name="Ishikawa J."/>
            <person name="Hara H."/>
            <person name="Suzuki H."/>
            <person name="Ikenoya M."/>
            <person name="Ikeda H."/>
            <person name="Yamashita A."/>
            <person name="Hattori M."/>
            <person name="Horinouchi S."/>
        </authorList>
    </citation>
    <scope>NUCLEOTIDE SEQUENCE [LARGE SCALE GENOMIC DNA]</scope>
    <source>
        <strain>JCM 4626 / CBS 651.72 / NBRC 13350 / KCC S-0626 / ISP 5235</strain>
    </source>
</reference>
<protein>
    <recommendedName>
        <fullName evidence="1">Crossover junction endodeoxyribonuclease RuvC</fullName>
        <ecNumber evidence="1">3.1.21.10</ecNumber>
    </recommendedName>
    <alternativeName>
        <fullName evidence="1">Holliday junction nuclease RuvC</fullName>
    </alternativeName>
    <alternativeName>
        <fullName evidence="1">Holliday junction resolvase RuvC</fullName>
    </alternativeName>
</protein>
<organism>
    <name type="scientific">Streptomyces griseus subsp. griseus (strain JCM 4626 / CBS 651.72 / NBRC 13350 / KCC S-0626 / ISP 5235)</name>
    <dbReference type="NCBI Taxonomy" id="455632"/>
    <lineage>
        <taxon>Bacteria</taxon>
        <taxon>Bacillati</taxon>
        <taxon>Actinomycetota</taxon>
        <taxon>Actinomycetes</taxon>
        <taxon>Kitasatosporales</taxon>
        <taxon>Streptomycetaceae</taxon>
        <taxon>Streptomyces</taxon>
    </lineage>
</organism>